<keyword id="KW-0479">Metal-binding</keyword>
<keyword id="KW-0539">Nucleus</keyword>
<keyword id="KW-1185">Reference proteome</keyword>
<keyword id="KW-0833">Ubl conjugation pathway</keyword>
<keyword id="KW-0862">Zinc</keyword>
<keyword id="KW-0863">Zinc-finger</keyword>
<gene>
    <name type="ordered locus">At1g67340</name>
    <name type="ORF">F1N21.16</name>
</gene>
<organism>
    <name type="scientific">Arabidopsis thaliana</name>
    <name type="common">Mouse-ear cress</name>
    <dbReference type="NCBI Taxonomy" id="3702"/>
    <lineage>
        <taxon>Eukaryota</taxon>
        <taxon>Viridiplantae</taxon>
        <taxon>Streptophyta</taxon>
        <taxon>Embryophyta</taxon>
        <taxon>Tracheophyta</taxon>
        <taxon>Spermatophyta</taxon>
        <taxon>Magnoliopsida</taxon>
        <taxon>eudicotyledons</taxon>
        <taxon>Gunneridae</taxon>
        <taxon>Pentapetalae</taxon>
        <taxon>rosids</taxon>
        <taxon>malvids</taxon>
        <taxon>Brassicales</taxon>
        <taxon>Brassicaceae</taxon>
        <taxon>Camelineae</taxon>
        <taxon>Arabidopsis</taxon>
    </lineage>
</organism>
<accession>Q9FYF9</accession>
<protein>
    <recommendedName>
        <fullName>F-box protein At1g67340</fullName>
    </recommendedName>
</protein>
<dbReference type="EMBL" id="AC002130">
    <property type="protein sequence ID" value="AAG00241.1"/>
    <property type="molecule type" value="Genomic_DNA"/>
</dbReference>
<dbReference type="EMBL" id="CP002684">
    <property type="protein sequence ID" value="AEE34633.1"/>
    <property type="molecule type" value="Genomic_DNA"/>
</dbReference>
<dbReference type="EMBL" id="AY057623">
    <property type="protein sequence ID" value="AAL14418.1"/>
    <property type="molecule type" value="mRNA"/>
</dbReference>
<dbReference type="EMBL" id="AY093102">
    <property type="protein sequence ID" value="AAM13101.1"/>
    <property type="molecule type" value="mRNA"/>
</dbReference>
<dbReference type="EMBL" id="BT000146">
    <property type="protein sequence ID" value="AAN15465.1"/>
    <property type="molecule type" value="mRNA"/>
</dbReference>
<dbReference type="PIR" id="H96696">
    <property type="entry name" value="H96696"/>
</dbReference>
<dbReference type="RefSeq" id="NP_564894.1">
    <property type="nucleotide sequence ID" value="NM_105402.3"/>
</dbReference>
<dbReference type="SMR" id="Q9FYF9"/>
<dbReference type="BioGRID" id="28276">
    <property type="interactions" value="5"/>
</dbReference>
<dbReference type="FunCoup" id="Q9FYF9">
    <property type="interactions" value="123"/>
</dbReference>
<dbReference type="IntAct" id="Q9FYF9">
    <property type="interactions" value="6"/>
</dbReference>
<dbReference type="STRING" id="3702.Q9FYF9"/>
<dbReference type="PaxDb" id="3702-AT1G67340.1"/>
<dbReference type="EnsemblPlants" id="AT1G67340.1">
    <property type="protein sequence ID" value="AT1G67340.1"/>
    <property type="gene ID" value="AT1G67340"/>
</dbReference>
<dbReference type="GeneID" id="843055"/>
<dbReference type="Gramene" id="AT1G67340.1">
    <property type="protein sequence ID" value="AT1G67340.1"/>
    <property type="gene ID" value="AT1G67340"/>
</dbReference>
<dbReference type="KEGG" id="ath:AT1G67340"/>
<dbReference type="Araport" id="AT1G67340"/>
<dbReference type="TAIR" id="AT1G67340"/>
<dbReference type="eggNOG" id="ENOG502QR5D">
    <property type="taxonomic scope" value="Eukaryota"/>
</dbReference>
<dbReference type="HOGENOM" id="CLU_042104_0_0_1"/>
<dbReference type="InParanoid" id="Q9FYF9"/>
<dbReference type="OMA" id="QPCESES"/>
<dbReference type="PhylomeDB" id="Q9FYF9"/>
<dbReference type="UniPathway" id="UPA00143"/>
<dbReference type="PRO" id="PR:Q9FYF9"/>
<dbReference type="Proteomes" id="UP000006548">
    <property type="component" value="Chromosome 1"/>
</dbReference>
<dbReference type="ExpressionAtlas" id="Q9FYF9">
    <property type="expression patterns" value="baseline and differential"/>
</dbReference>
<dbReference type="GO" id="GO:0005634">
    <property type="term" value="C:nucleus"/>
    <property type="evidence" value="ECO:0007005"/>
    <property type="project" value="TAIR"/>
</dbReference>
<dbReference type="GO" id="GO:0008270">
    <property type="term" value="F:zinc ion binding"/>
    <property type="evidence" value="ECO:0007669"/>
    <property type="project" value="UniProtKB-KW"/>
</dbReference>
<dbReference type="GO" id="GO:0016567">
    <property type="term" value="P:protein ubiquitination"/>
    <property type="evidence" value="ECO:0007669"/>
    <property type="project" value="UniProtKB-UniPathway"/>
</dbReference>
<dbReference type="FunFam" id="6.10.140.2220:FF:000033">
    <property type="entry name" value="Predicted protein"/>
    <property type="match status" value="1"/>
</dbReference>
<dbReference type="Gene3D" id="6.10.140.2220">
    <property type="match status" value="1"/>
</dbReference>
<dbReference type="Gene3D" id="1.25.40.10">
    <property type="entry name" value="Tetratricopeptide repeat domain"/>
    <property type="match status" value="1"/>
</dbReference>
<dbReference type="InterPro" id="IPR057136">
    <property type="entry name" value="At2g35280_TPR_dom"/>
</dbReference>
<dbReference type="InterPro" id="IPR044508">
    <property type="entry name" value="At5g50450/At1g67340-like"/>
</dbReference>
<dbReference type="InterPro" id="IPR036047">
    <property type="entry name" value="F-box-like_dom_sf"/>
</dbReference>
<dbReference type="InterPro" id="IPR011990">
    <property type="entry name" value="TPR-like_helical_dom_sf"/>
</dbReference>
<dbReference type="InterPro" id="IPR002893">
    <property type="entry name" value="Znf_MYND"/>
</dbReference>
<dbReference type="PANTHER" id="PTHR46758">
    <property type="entry name" value="MYND DOMAIN-CONTAINING"/>
    <property type="match status" value="1"/>
</dbReference>
<dbReference type="PANTHER" id="PTHR46758:SF2">
    <property type="entry name" value="OJ1485_B09.11 PROTEIN"/>
    <property type="match status" value="1"/>
</dbReference>
<dbReference type="Pfam" id="PF23310">
    <property type="entry name" value="TPR_27"/>
    <property type="match status" value="1"/>
</dbReference>
<dbReference type="Pfam" id="PF01753">
    <property type="entry name" value="zf-MYND"/>
    <property type="match status" value="1"/>
</dbReference>
<dbReference type="SUPFAM" id="SSF81383">
    <property type="entry name" value="F-box domain"/>
    <property type="match status" value="1"/>
</dbReference>
<dbReference type="SUPFAM" id="SSF81901">
    <property type="entry name" value="HCP-like"/>
    <property type="match status" value="1"/>
</dbReference>
<dbReference type="SUPFAM" id="SSF144232">
    <property type="entry name" value="HIT/MYND zinc finger-like"/>
    <property type="match status" value="1"/>
</dbReference>
<dbReference type="PROSITE" id="PS01360">
    <property type="entry name" value="ZF_MYND_1"/>
    <property type="match status" value="1"/>
</dbReference>
<dbReference type="PROSITE" id="PS50865">
    <property type="entry name" value="ZF_MYND_2"/>
    <property type="match status" value="1"/>
</dbReference>
<name>FB76_ARATH</name>
<sequence>MLPSRKTKRVFSCDFTPGRKRRRCVVVPSSVSPVPENTTGADLLDSIPDDLVISILCKLGSTSRCPADFINVLLTCKRLKGLAMNPIVLSRLSPKAIAVKAHNWSEYSHRFLKRCVDAGSLEACYTLGMIRFYCLQNRGNGASLMAKAAISSHAPALYSLAVIQFNGSGGSKNDKDLRAGVALCARAAFLGHVDALRELGHCLQDGYGVPQNVSEGRRFLVQANARELAAVLSSGIQARSTWLSLSQPPPPVVPNHGQQTCPLLSDFGCNVPAPETHPANRFLADWFAVRGGDCPGDGLRLCSHAGCGRPETRKHEFRRCSVCGVVNYCSRACQALDWKLRHKMDCAPVQRWLEEGDGGEGNVQIDGNGNGDNVLLPMS</sequence>
<comment type="function">
    <text evidence="1">Component of SCF(ASK-cullin-F-box) E3 ubiquitin ligase complexes, which may mediate the ubiquitination and subsequent proteasomal degradation of target proteins.</text>
</comment>
<comment type="pathway">
    <text>Protein modification; protein ubiquitination.</text>
</comment>
<comment type="subunit">
    <text evidence="1 4">Part of a SCF (ASK-cullin-F-box) protein ligase complex (By similarity). Interacts with SKP1A/ASK1, SKP1B/ASK2, ASK4, ASK11 and ASK13.</text>
</comment>
<comment type="interaction">
    <interactant intactId="EBI-591197">
        <id>Q9FYF9</id>
    </interactant>
    <interactant intactId="EBI-15215062">
        <id>O80883</id>
        <label>MYB101</label>
    </interactant>
    <organismsDiffer>false</organismsDiffer>
    <experiments>3</experiments>
</comment>
<comment type="subcellular location">
    <subcellularLocation>
        <location evidence="1">Nucleus</location>
    </subcellularLocation>
</comment>
<comment type="domain">
    <text evidence="1">The F-box is necessary for the interaction with ASK proteins.</text>
</comment>
<reference key="1">
    <citation type="journal article" date="2000" name="Nature">
        <title>Sequence and analysis of chromosome 1 of the plant Arabidopsis thaliana.</title>
        <authorList>
            <person name="Theologis A."/>
            <person name="Ecker J.R."/>
            <person name="Palm C.J."/>
            <person name="Federspiel N.A."/>
            <person name="Kaul S."/>
            <person name="White O."/>
            <person name="Alonso J."/>
            <person name="Altafi H."/>
            <person name="Araujo R."/>
            <person name="Bowman C.L."/>
            <person name="Brooks S.Y."/>
            <person name="Buehler E."/>
            <person name="Chan A."/>
            <person name="Chao Q."/>
            <person name="Chen H."/>
            <person name="Cheuk R.F."/>
            <person name="Chin C.W."/>
            <person name="Chung M.K."/>
            <person name="Conn L."/>
            <person name="Conway A.B."/>
            <person name="Conway A.R."/>
            <person name="Creasy T.H."/>
            <person name="Dewar K."/>
            <person name="Dunn P."/>
            <person name="Etgu P."/>
            <person name="Feldblyum T.V."/>
            <person name="Feng J.-D."/>
            <person name="Fong B."/>
            <person name="Fujii C.Y."/>
            <person name="Gill J.E."/>
            <person name="Goldsmith A.D."/>
            <person name="Haas B."/>
            <person name="Hansen N.F."/>
            <person name="Hughes B."/>
            <person name="Huizar L."/>
            <person name="Hunter J.L."/>
            <person name="Jenkins J."/>
            <person name="Johnson-Hopson C."/>
            <person name="Khan S."/>
            <person name="Khaykin E."/>
            <person name="Kim C.J."/>
            <person name="Koo H.L."/>
            <person name="Kremenetskaia I."/>
            <person name="Kurtz D.B."/>
            <person name="Kwan A."/>
            <person name="Lam B."/>
            <person name="Langin-Hooper S."/>
            <person name="Lee A."/>
            <person name="Lee J.M."/>
            <person name="Lenz C.A."/>
            <person name="Li J.H."/>
            <person name="Li Y.-P."/>
            <person name="Lin X."/>
            <person name="Liu S.X."/>
            <person name="Liu Z.A."/>
            <person name="Luros J.S."/>
            <person name="Maiti R."/>
            <person name="Marziali A."/>
            <person name="Militscher J."/>
            <person name="Miranda M."/>
            <person name="Nguyen M."/>
            <person name="Nierman W.C."/>
            <person name="Osborne B.I."/>
            <person name="Pai G."/>
            <person name="Peterson J."/>
            <person name="Pham P.K."/>
            <person name="Rizzo M."/>
            <person name="Rooney T."/>
            <person name="Rowley D."/>
            <person name="Sakano H."/>
            <person name="Salzberg S.L."/>
            <person name="Schwartz J.R."/>
            <person name="Shinn P."/>
            <person name="Southwick A.M."/>
            <person name="Sun H."/>
            <person name="Tallon L.J."/>
            <person name="Tambunga G."/>
            <person name="Toriumi M.J."/>
            <person name="Town C.D."/>
            <person name="Utterback T."/>
            <person name="Van Aken S."/>
            <person name="Vaysberg M."/>
            <person name="Vysotskaia V.S."/>
            <person name="Walker M."/>
            <person name="Wu D."/>
            <person name="Yu G."/>
            <person name="Fraser C.M."/>
            <person name="Venter J.C."/>
            <person name="Davis R.W."/>
        </authorList>
    </citation>
    <scope>NUCLEOTIDE SEQUENCE [LARGE SCALE GENOMIC DNA]</scope>
    <source>
        <strain>cv. Columbia</strain>
    </source>
</reference>
<reference key="2">
    <citation type="journal article" date="2017" name="Plant J.">
        <title>Araport11: a complete reannotation of the Arabidopsis thaliana reference genome.</title>
        <authorList>
            <person name="Cheng C.Y."/>
            <person name="Krishnakumar V."/>
            <person name="Chan A.P."/>
            <person name="Thibaud-Nissen F."/>
            <person name="Schobel S."/>
            <person name="Town C.D."/>
        </authorList>
    </citation>
    <scope>GENOME REANNOTATION</scope>
    <source>
        <strain>cv. Columbia</strain>
    </source>
</reference>
<reference key="3">
    <citation type="journal article" date="2003" name="Science">
        <title>Empirical analysis of transcriptional activity in the Arabidopsis genome.</title>
        <authorList>
            <person name="Yamada K."/>
            <person name="Lim J."/>
            <person name="Dale J.M."/>
            <person name="Chen H."/>
            <person name="Shinn P."/>
            <person name="Palm C.J."/>
            <person name="Southwick A.M."/>
            <person name="Wu H.C."/>
            <person name="Kim C.J."/>
            <person name="Nguyen M."/>
            <person name="Pham P.K."/>
            <person name="Cheuk R.F."/>
            <person name="Karlin-Newmann G."/>
            <person name="Liu S.X."/>
            <person name="Lam B."/>
            <person name="Sakano H."/>
            <person name="Wu T."/>
            <person name="Yu G."/>
            <person name="Miranda M."/>
            <person name="Quach H.L."/>
            <person name="Tripp M."/>
            <person name="Chang C.H."/>
            <person name="Lee J.M."/>
            <person name="Toriumi M.J."/>
            <person name="Chan M.M."/>
            <person name="Tang C.C."/>
            <person name="Onodera C.S."/>
            <person name="Deng J.M."/>
            <person name="Akiyama K."/>
            <person name="Ansari Y."/>
            <person name="Arakawa T."/>
            <person name="Banh J."/>
            <person name="Banno F."/>
            <person name="Bowser L."/>
            <person name="Brooks S.Y."/>
            <person name="Carninci P."/>
            <person name="Chao Q."/>
            <person name="Choy N."/>
            <person name="Enju A."/>
            <person name="Goldsmith A.D."/>
            <person name="Gurjal M."/>
            <person name="Hansen N.F."/>
            <person name="Hayashizaki Y."/>
            <person name="Johnson-Hopson C."/>
            <person name="Hsuan V.W."/>
            <person name="Iida K."/>
            <person name="Karnes M."/>
            <person name="Khan S."/>
            <person name="Koesema E."/>
            <person name="Ishida J."/>
            <person name="Jiang P.X."/>
            <person name="Jones T."/>
            <person name="Kawai J."/>
            <person name="Kamiya A."/>
            <person name="Meyers C."/>
            <person name="Nakajima M."/>
            <person name="Narusaka M."/>
            <person name="Seki M."/>
            <person name="Sakurai T."/>
            <person name="Satou M."/>
            <person name="Tamse R."/>
            <person name="Vaysberg M."/>
            <person name="Wallender E.K."/>
            <person name="Wong C."/>
            <person name="Yamamura Y."/>
            <person name="Yuan S."/>
            <person name="Shinozaki K."/>
            <person name="Davis R.W."/>
            <person name="Theologis A."/>
            <person name="Ecker J.R."/>
        </authorList>
    </citation>
    <scope>NUCLEOTIDE SEQUENCE [LARGE SCALE MRNA]</scope>
    <source>
        <strain>cv. Columbia</strain>
    </source>
</reference>
<reference key="4">
    <citation type="journal article" date="2002" name="Proc. Natl. Acad. Sci. U.S.A.">
        <title>The F-box subunit of the SCF E3 complex is encoded by a diverse superfamily of genes in Arabidopsis.</title>
        <authorList>
            <person name="Gagne J.M."/>
            <person name="Downes B.P."/>
            <person name="Shiu S.-H."/>
            <person name="Durski A.M."/>
            <person name="Vierstra R.D."/>
        </authorList>
    </citation>
    <scope>INTERACTION WITH SKP1A/ASK1; SKP1B/ASK2; ASK4; ASK11 AND ASK13</scope>
</reference>
<feature type="chain" id="PRO_0000283349" description="F-box protein At1g67340">
    <location>
        <begin position="1"/>
        <end position="379"/>
    </location>
</feature>
<feature type="domain" description="F-box">
    <location>
        <begin position="41"/>
        <end position="92"/>
    </location>
</feature>
<feature type="zinc finger region" description="MYND-type; atypical" evidence="2">
    <location>
        <begin position="304"/>
        <end position="346"/>
    </location>
</feature>
<feature type="region of interest" description="Disordered" evidence="3">
    <location>
        <begin position="358"/>
        <end position="379"/>
    </location>
</feature>
<feature type="binding site" evidence="2">
    <location>
        <position position="304"/>
    </location>
    <ligand>
        <name>Zn(2+)</name>
        <dbReference type="ChEBI" id="CHEBI:29105"/>
        <label>1</label>
    </ligand>
</feature>
<feature type="binding site" evidence="2">
    <location>
        <position position="307"/>
    </location>
    <ligand>
        <name>Zn(2+)</name>
        <dbReference type="ChEBI" id="CHEBI:29105"/>
        <label>1</label>
    </ligand>
</feature>
<feature type="binding site" evidence="2">
    <location>
        <position position="320"/>
    </location>
    <ligand>
        <name>Zn(2+)</name>
        <dbReference type="ChEBI" id="CHEBI:29105"/>
        <label>2</label>
    </ligand>
</feature>
<feature type="binding site" evidence="2">
    <location>
        <position position="323"/>
    </location>
    <ligand>
        <name>Zn(2+)</name>
        <dbReference type="ChEBI" id="CHEBI:29105"/>
        <label>2</label>
    </ligand>
</feature>
<feature type="binding site" evidence="2">
    <location>
        <position position="329"/>
    </location>
    <ligand>
        <name>Zn(2+)</name>
        <dbReference type="ChEBI" id="CHEBI:29105"/>
        <label>1</label>
    </ligand>
</feature>
<feature type="binding site" evidence="2">
    <location>
        <position position="333"/>
    </location>
    <ligand>
        <name>Zn(2+)</name>
        <dbReference type="ChEBI" id="CHEBI:29105"/>
        <label>1</label>
    </ligand>
</feature>
<feature type="binding site" evidence="2">
    <location>
        <position position="342"/>
    </location>
    <ligand>
        <name>Zn(2+)</name>
        <dbReference type="ChEBI" id="CHEBI:29105"/>
        <label>2</label>
    </ligand>
</feature>
<feature type="binding site" evidence="2">
    <location>
        <position position="346"/>
    </location>
    <ligand>
        <name>Zn(2+)</name>
        <dbReference type="ChEBI" id="CHEBI:29105"/>
        <label>2</label>
    </ligand>
</feature>
<proteinExistence type="evidence at protein level"/>
<evidence type="ECO:0000250" key="1"/>
<evidence type="ECO:0000255" key="2">
    <source>
        <dbReference type="PROSITE-ProRule" id="PRU00134"/>
    </source>
</evidence>
<evidence type="ECO:0000256" key="3">
    <source>
        <dbReference type="SAM" id="MobiDB-lite"/>
    </source>
</evidence>
<evidence type="ECO:0000269" key="4">
    <source>
    </source>
</evidence>